<sequence length="695" mass="77535">MQYTPFASDIELPFYTSLASLKINHDKLDDSARKLLGLYEIRSTDRPEASCRMQIHGTALTRDEVPFGYYRAEGMIKNVNTIEEYHNIDRNALLLQTGKMIWDAINDETIYSCPSLLVSFIVLSFADLKKYKFSYWFAFPAIHSAPSWTSVMDPKPLTGNESSTLVDAVQTWRYGVDARQHGFFLARKDWHVVNSPSDGTVLNKAHVDNQQSLSPIAKELGFSWKISSISDFETGFFHDALPEDCFVCFADPSNYPDAPGWMLRNLLVLVRQRWKLNEVYILRYRDVQSKRDQGRSVVLKLRSDTAHLDPNDSRLGSQMPMPKVTGWERNAAGKLTGRVTNLTEYMDPRRLADQSVDLNLKLMKWRISPNLNLENIKNTKCLLLGAGTLGSYVARNLLGWGVRKITFVDNGTVSFSNPVRQPLFGFNDCLGGGAKKALRAAAALEEIYPGVDASGYVLSVPMPGHPITDASKAELEFKELKKLVDEHDAIFVLLDTREARWLPTVMGKATGKIVMNAALGFDTYVVMRHGVENCSAPETELGCYFCNDVVAPADSIKDQTLDQQCTVTRPGIAAIASALLVELFVSVLQHPDGPAAPASIPKQESRTDHPLGIVPHQIRGFLSNFSNVIVSGKSYNCCSACSGNIMDAYKNHGWDFVRKAVNERNYVEELSGLKEVSLSLKKRVVIGTKFHRSSV</sequence>
<organism>
    <name type="scientific">Ajellomyces capsulatus (strain NAm1 / WU24)</name>
    <name type="common">Darling's disease fungus</name>
    <name type="synonym">Histoplasma capsulatum</name>
    <dbReference type="NCBI Taxonomy" id="2059318"/>
    <lineage>
        <taxon>Eukaryota</taxon>
        <taxon>Fungi</taxon>
        <taxon>Dikarya</taxon>
        <taxon>Ascomycota</taxon>
        <taxon>Pezizomycotina</taxon>
        <taxon>Eurotiomycetes</taxon>
        <taxon>Eurotiomycetidae</taxon>
        <taxon>Onygenales</taxon>
        <taxon>Ajellomycetaceae</taxon>
        <taxon>Histoplasma</taxon>
    </lineage>
</organism>
<dbReference type="EMBL" id="CH476655">
    <property type="protein sequence ID" value="EDN04168.1"/>
    <property type="molecule type" value="Genomic_DNA"/>
</dbReference>
<dbReference type="SMR" id="A6QXC6"/>
<dbReference type="STRING" id="339724.A6QXC6"/>
<dbReference type="KEGG" id="aje:HCAG_02033"/>
<dbReference type="VEuPathDB" id="FungiDB:HCAG_02033"/>
<dbReference type="HOGENOM" id="CLU_012998_2_1_1"/>
<dbReference type="OMA" id="RQIWDAI"/>
<dbReference type="OrthoDB" id="1368at299071"/>
<dbReference type="Proteomes" id="UP000009297">
    <property type="component" value="Unassembled WGS sequence"/>
</dbReference>
<dbReference type="GO" id="GO:0000407">
    <property type="term" value="C:phagophore assembly site"/>
    <property type="evidence" value="ECO:0007669"/>
    <property type="project" value="UniProtKB-SubCell"/>
</dbReference>
<dbReference type="GO" id="GO:0019778">
    <property type="term" value="F:Atg12 activating enzyme activity"/>
    <property type="evidence" value="ECO:0007669"/>
    <property type="project" value="TreeGrafter"/>
</dbReference>
<dbReference type="GO" id="GO:0019779">
    <property type="term" value="F:Atg8 activating enzyme activity"/>
    <property type="evidence" value="ECO:0007669"/>
    <property type="project" value="TreeGrafter"/>
</dbReference>
<dbReference type="GO" id="GO:0000045">
    <property type="term" value="P:autophagosome assembly"/>
    <property type="evidence" value="ECO:0007669"/>
    <property type="project" value="TreeGrafter"/>
</dbReference>
<dbReference type="GO" id="GO:0000422">
    <property type="term" value="P:autophagy of mitochondrion"/>
    <property type="evidence" value="ECO:0007669"/>
    <property type="project" value="TreeGrafter"/>
</dbReference>
<dbReference type="GO" id="GO:0006995">
    <property type="term" value="P:cellular response to nitrogen starvation"/>
    <property type="evidence" value="ECO:0007669"/>
    <property type="project" value="TreeGrafter"/>
</dbReference>
<dbReference type="GO" id="GO:0034727">
    <property type="term" value="P:piecemeal microautophagy of the nucleus"/>
    <property type="evidence" value="ECO:0007669"/>
    <property type="project" value="TreeGrafter"/>
</dbReference>
<dbReference type="GO" id="GO:0032446">
    <property type="term" value="P:protein modification by small protein conjugation"/>
    <property type="evidence" value="ECO:0007669"/>
    <property type="project" value="TreeGrafter"/>
</dbReference>
<dbReference type="GO" id="GO:0015031">
    <property type="term" value="P:protein transport"/>
    <property type="evidence" value="ECO:0007669"/>
    <property type="project" value="UniProtKB-KW"/>
</dbReference>
<dbReference type="CDD" id="cd01486">
    <property type="entry name" value="Apg7"/>
    <property type="match status" value="1"/>
</dbReference>
<dbReference type="FunFam" id="3.40.50.720:FF:000243">
    <property type="entry name" value="Ubiquitin-like modifier-activating enzyme ATG7"/>
    <property type="match status" value="1"/>
</dbReference>
<dbReference type="FunFam" id="3.40.140.70:FF:000001">
    <property type="entry name" value="Ubiquitin-like modifier-activating enzyme atg7"/>
    <property type="match status" value="1"/>
</dbReference>
<dbReference type="Gene3D" id="3.40.50.720">
    <property type="entry name" value="NAD(P)-binding Rossmann-like Domain"/>
    <property type="match status" value="1"/>
</dbReference>
<dbReference type="Gene3D" id="3.40.140.100">
    <property type="entry name" value="Ubiquitin-like modifier-activating enzyme ATG7 C-terminal domain"/>
    <property type="match status" value="1"/>
</dbReference>
<dbReference type="Gene3D" id="3.40.140.70">
    <property type="entry name" value="Ubiquitin-like modifier-activating enzyme ATG7 N-terminal domain"/>
    <property type="match status" value="1"/>
</dbReference>
<dbReference type="InterPro" id="IPR006285">
    <property type="entry name" value="Atg7"/>
</dbReference>
<dbReference type="InterPro" id="IPR032197">
    <property type="entry name" value="Atg7_N"/>
</dbReference>
<dbReference type="InterPro" id="IPR042522">
    <property type="entry name" value="Atg7_N_1"/>
</dbReference>
<dbReference type="InterPro" id="IPR042523">
    <property type="entry name" value="Atg7_N_2"/>
</dbReference>
<dbReference type="InterPro" id="IPR045886">
    <property type="entry name" value="ThiF/MoeB/HesA"/>
</dbReference>
<dbReference type="InterPro" id="IPR000594">
    <property type="entry name" value="ThiF_NAD_FAD-bd"/>
</dbReference>
<dbReference type="InterPro" id="IPR035985">
    <property type="entry name" value="Ubiquitin-activating_enz"/>
</dbReference>
<dbReference type="NCBIfam" id="TIGR01381">
    <property type="entry name" value="E1_like_apg7"/>
    <property type="match status" value="1"/>
</dbReference>
<dbReference type="PANTHER" id="PTHR10953">
    <property type="entry name" value="UBIQUITIN-ACTIVATING ENZYME E1"/>
    <property type="match status" value="1"/>
</dbReference>
<dbReference type="PANTHER" id="PTHR10953:SF3">
    <property type="entry name" value="UBIQUITIN-LIKE MODIFIER-ACTIVATING ENZYME ATG7"/>
    <property type="match status" value="1"/>
</dbReference>
<dbReference type="Pfam" id="PF16420">
    <property type="entry name" value="ATG7_N"/>
    <property type="match status" value="1"/>
</dbReference>
<dbReference type="Pfam" id="PF00899">
    <property type="entry name" value="ThiF"/>
    <property type="match status" value="1"/>
</dbReference>
<dbReference type="SUPFAM" id="SSF69572">
    <property type="entry name" value="Activating enzymes of the ubiquitin-like proteins"/>
    <property type="match status" value="1"/>
</dbReference>
<protein>
    <recommendedName>
        <fullName>Ubiquitin-like modifier-activating enzyme ATG7</fullName>
    </recommendedName>
    <alternativeName>
        <fullName>ATG12-activating enzyme E1 ATG7</fullName>
    </alternativeName>
    <alternativeName>
        <fullName>Autophagy-related protein 7</fullName>
    </alternativeName>
</protein>
<gene>
    <name type="primary">ATG7</name>
    <name type="ORF">HCAG_02033</name>
</gene>
<keyword id="KW-0072">Autophagy</keyword>
<keyword id="KW-0963">Cytoplasm</keyword>
<keyword id="KW-0653">Protein transport</keyword>
<keyword id="KW-1185">Reference proteome</keyword>
<keyword id="KW-0813">Transport</keyword>
<keyword id="KW-0833">Ubl conjugation pathway</keyword>
<name>ATG7_AJECN</name>
<evidence type="ECO:0000250" key="1"/>
<evidence type="ECO:0000305" key="2"/>
<feature type="chain" id="PRO_0000317865" description="Ubiquitin-like modifier-activating enzyme ATG7">
    <location>
        <begin position="1"/>
        <end position="695"/>
    </location>
</feature>
<feature type="short sequence motif" description="GXGXXG motif" evidence="1">
    <location>
        <begin position="385"/>
        <end position="390"/>
    </location>
</feature>
<feature type="active site" description="Glycyl thioester intermediate" evidence="1">
    <location>
        <position position="565"/>
    </location>
</feature>
<proteinExistence type="inferred from homology"/>
<accession>A6QXC6</accession>
<reference key="1">
    <citation type="journal article" date="2009" name="Genome Res.">
        <title>Comparative genomic analyses of the human fungal pathogens Coccidioides and their relatives.</title>
        <authorList>
            <person name="Sharpton T.J."/>
            <person name="Stajich J.E."/>
            <person name="Rounsley S.D."/>
            <person name="Gardner M.J."/>
            <person name="Wortman J.R."/>
            <person name="Jordar V.S."/>
            <person name="Maiti R."/>
            <person name="Kodira C.D."/>
            <person name="Neafsey D.E."/>
            <person name="Zeng Q."/>
            <person name="Hung C.-Y."/>
            <person name="McMahan C."/>
            <person name="Muszewska A."/>
            <person name="Grynberg M."/>
            <person name="Mandel M.A."/>
            <person name="Kellner E.M."/>
            <person name="Barker B.M."/>
            <person name="Galgiani J.N."/>
            <person name="Orbach M.J."/>
            <person name="Kirkland T.N."/>
            <person name="Cole G.T."/>
            <person name="Henn M.R."/>
            <person name="Birren B.W."/>
            <person name="Taylor J.W."/>
        </authorList>
    </citation>
    <scope>NUCLEOTIDE SEQUENCE [LARGE SCALE GENOMIC DNA]</scope>
    <source>
        <strain>NAm1 / WU24</strain>
    </source>
</reference>
<comment type="function">
    <text evidence="1">E1-like activating enzyme involved in the 2 ubiquitin-like systems required for cytoplasm to vacuole transport (Cvt) and autophagy. Activates ATG12 for its conjugation with ATG5 and ATG8 for its conjugation with phosphatidylethanolamine. Both systems are needed for the ATG8 association to Cvt vesicles and autophagosomes membranes. Autophagy is essential for maintenance of amino acid levels and protein synthesis under nitrogen starvation. Required for selective autophagic degradation of the nucleus (nucleophagy) as well as for mitophagy which contributes to regulate mitochondrial quantity and quality by eliminating the mitochondria to a basal level to fulfill cellular energy requirements and preventing excess ROS production. Plays a role in the regulation of filamentous growth and chronological longevity (By similarity).</text>
</comment>
<comment type="subunit">
    <text evidence="1">Homodimer.</text>
</comment>
<comment type="subcellular location">
    <subcellularLocation>
        <location evidence="1">Cytoplasm</location>
    </subcellularLocation>
    <subcellularLocation>
        <location evidence="1">Preautophagosomal structure</location>
    </subcellularLocation>
</comment>
<comment type="domain">
    <text evidence="1">The GxGxxG motif is important for the function, possibly through binding with ATP.</text>
</comment>
<comment type="similarity">
    <text evidence="2">Belongs to the ATG7 family.</text>
</comment>